<dbReference type="EC" id="3.7.1.3" evidence="1"/>
<dbReference type="EMBL" id="FO080555">
    <property type="protein sequence ID" value="CCD64633.1"/>
    <property type="molecule type" value="Genomic_DNA"/>
</dbReference>
<dbReference type="EMBL" id="AF303267">
    <property type="protein sequence ID" value="AAG50225.1"/>
    <property type="molecule type" value="mRNA"/>
</dbReference>
<dbReference type="PIR" id="T15516">
    <property type="entry name" value="T15516"/>
</dbReference>
<dbReference type="RefSeq" id="NP_509023.1">
    <property type="nucleotide sequence ID" value="NM_076622.8"/>
</dbReference>
<dbReference type="SMR" id="Q18026"/>
<dbReference type="BioGRID" id="45815">
    <property type="interactions" value="2"/>
</dbReference>
<dbReference type="FunCoup" id="Q18026">
    <property type="interactions" value="426"/>
</dbReference>
<dbReference type="IntAct" id="Q18026">
    <property type="interactions" value="1"/>
</dbReference>
<dbReference type="STRING" id="6239.C15H9.7.1"/>
<dbReference type="PaxDb" id="6239-C15H9.7"/>
<dbReference type="PeptideAtlas" id="Q18026"/>
<dbReference type="EnsemblMetazoa" id="C15H9.7.1">
    <property type="protein sequence ID" value="C15H9.7.1"/>
    <property type="gene ID" value="WBGene00015802"/>
</dbReference>
<dbReference type="GeneID" id="180883"/>
<dbReference type="KEGG" id="cel:CELE_C15H9.7"/>
<dbReference type="UCSC" id="C15H9.7">
    <property type="organism name" value="c. elegans"/>
</dbReference>
<dbReference type="AGR" id="WB:WBGene00015802"/>
<dbReference type="CTD" id="180883"/>
<dbReference type="WormBase" id="C15H9.7">
    <property type="protein sequence ID" value="CE06835"/>
    <property type="gene ID" value="WBGene00015802"/>
    <property type="gene designation" value="kynu-1"/>
</dbReference>
<dbReference type="eggNOG" id="KOG3846">
    <property type="taxonomic scope" value="Eukaryota"/>
</dbReference>
<dbReference type="GeneTree" id="ENSGT00390000008033"/>
<dbReference type="HOGENOM" id="CLU_003433_4_0_1"/>
<dbReference type="InParanoid" id="Q18026"/>
<dbReference type="OMA" id="LPGWNSH"/>
<dbReference type="OrthoDB" id="5978656at2759"/>
<dbReference type="PhylomeDB" id="Q18026"/>
<dbReference type="Reactome" id="R-CEL-71240">
    <property type="pathway name" value="Tryptophan catabolism"/>
</dbReference>
<dbReference type="UniPathway" id="UPA00253">
    <property type="reaction ID" value="UER00329"/>
</dbReference>
<dbReference type="UniPathway" id="UPA00334">
    <property type="reaction ID" value="UER00455"/>
</dbReference>
<dbReference type="PRO" id="PR:Q18026"/>
<dbReference type="Proteomes" id="UP000001940">
    <property type="component" value="Chromosome X"/>
</dbReference>
<dbReference type="Bgee" id="WBGene00015802">
    <property type="expression patterns" value="Expressed in material anatomical entity and 4 other cell types or tissues"/>
</dbReference>
<dbReference type="GO" id="GO:0005737">
    <property type="term" value="C:cytoplasm"/>
    <property type="evidence" value="ECO:0000318"/>
    <property type="project" value="GO_Central"/>
</dbReference>
<dbReference type="GO" id="GO:0030429">
    <property type="term" value="F:kynureninase activity"/>
    <property type="evidence" value="ECO:0000318"/>
    <property type="project" value="GO_Central"/>
</dbReference>
<dbReference type="GO" id="GO:0030170">
    <property type="term" value="F:pyridoxal phosphate binding"/>
    <property type="evidence" value="ECO:0007669"/>
    <property type="project" value="UniProtKB-UniRule"/>
</dbReference>
<dbReference type="GO" id="GO:0034354">
    <property type="term" value="P:'de novo' NAD biosynthetic process from L-tryptophan"/>
    <property type="evidence" value="ECO:0007669"/>
    <property type="project" value="UniProtKB-UniRule"/>
</dbReference>
<dbReference type="GO" id="GO:0043420">
    <property type="term" value="P:anthranilate metabolic process"/>
    <property type="evidence" value="ECO:0000318"/>
    <property type="project" value="GO_Central"/>
</dbReference>
<dbReference type="GO" id="GO:0097053">
    <property type="term" value="P:L-kynurenine catabolic process"/>
    <property type="evidence" value="ECO:0007669"/>
    <property type="project" value="UniProtKB-UniRule"/>
</dbReference>
<dbReference type="GO" id="GO:0019441">
    <property type="term" value="P:L-tryptophan catabolic process to kynurenine"/>
    <property type="evidence" value="ECO:0000318"/>
    <property type="project" value="GO_Central"/>
</dbReference>
<dbReference type="GO" id="GO:0019805">
    <property type="term" value="P:quinolinate biosynthetic process"/>
    <property type="evidence" value="ECO:0007669"/>
    <property type="project" value="UniProtKB-UniRule"/>
</dbReference>
<dbReference type="FunFam" id="3.40.640.10:FF:000031">
    <property type="entry name" value="Kynureninase"/>
    <property type="match status" value="1"/>
</dbReference>
<dbReference type="Gene3D" id="3.90.1150.10">
    <property type="entry name" value="Aspartate Aminotransferase, domain 1"/>
    <property type="match status" value="1"/>
</dbReference>
<dbReference type="Gene3D" id="3.40.640.10">
    <property type="entry name" value="Type I PLP-dependent aspartate aminotransferase-like (Major domain)"/>
    <property type="match status" value="1"/>
</dbReference>
<dbReference type="HAMAP" id="MF_01970">
    <property type="entry name" value="Kynureninase"/>
    <property type="match status" value="1"/>
</dbReference>
<dbReference type="InterPro" id="IPR010111">
    <property type="entry name" value="Kynureninase"/>
</dbReference>
<dbReference type="InterPro" id="IPR015424">
    <property type="entry name" value="PyrdxlP-dep_Trfase"/>
</dbReference>
<dbReference type="InterPro" id="IPR015421">
    <property type="entry name" value="PyrdxlP-dep_Trfase_major"/>
</dbReference>
<dbReference type="InterPro" id="IPR015422">
    <property type="entry name" value="PyrdxlP-dep_Trfase_small"/>
</dbReference>
<dbReference type="NCBIfam" id="TIGR01814">
    <property type="entry name" value="kynureninase"/>
    <property type="match status" value="1"/>
</dbReference>
<dbReference type="PANTHER" id="PTHR14084">
    <property type="entry name" value="KYNURENINASE"/>
    <property type="match status" value="1"/>
</dbReference>
<dbReference type="PANTHER" id="PTHR14084:SF0">
    <property type="entry name" value="KYNURENINASE"/>
    <property type="match status" value="1"/>
</dbReference>
<dbReference type="Pfam" id="PF22580">
    <property type="entry name" value="KYNU_C"/>
    <property type="match status" value="1"/>
</dbReference>
<dbReference type="PIRSF" id="PIRSF038800">
    <property type="entry name" value="KYNU"/>
    <property type="match status" value="1"/>
</dbReference>
<dbReference type="SUPFAM" id="SSF53383">
    <property type="entry name" value="PLP-dependent transferases"/>
    <property type="match status" value="1"/>
</dbReference>
<organism>
    <name type="scientific">Caenorhabditis elegans</name>
    <dbReference type="NCBI Taxonomy" id="6239"/>
    <lineage>
        <taxon>Eukaryota</taxon>
        <taxon>Metazoa</taxon>
        <taxon>Ecdysozoa</taxon>
        <taxon>Nematoda</taxon>
        <taxon>Chromadorea</taxon>
        <taxon>Rhabditida</taxon>
        <taxon>Rhabditina</taxon>
        <taxon>Rhabditomorpha</taxon>
        <taxon>Rhabditoidea</taxon>
        <taxon>Rhabditidae</taxon>
        <taxon>Peloderinae</taxon>
        <taxon>Caenorhabditis</taxon>
    </lineage>
</organism>
<sequence length="478" mass="54050">MSDAPPQPENEQECMCTQDKVLQFLNKMADESGIKDLTDPALAEFLSDSDALKEIRDLFHYPKAGTLPDADPSLVDPESDSIYLCGNSLGLMPKATGEVMKDHLDKWAKMGVFGHMSGEVPWAHCDEYCLEGVGRLVGAKKEEVSVCNSLTVNIHVLLTSFYKPTETRHKILLESKAFPSDHYAIESQIRLKGRTVQDSMVCLEPREGEETLRTEDILDYIEKNGDEIAIVFFSGIQYYTGQLFDMRAITEAGHRKGCFVGFDLAHAFANVPLHLHWWDVDFACWCSYKYGCTGAGSIGGLFVHERFLNDQRERMLGWWSHKMSSRFVMDNVLDLDEGAAGYRISNPPIHTVAAMLGSLKVFDQVSLENLRSRSCYLTGYLEYLVKTLFGENSEQRTTKLSISIITPEEFHQRGCQLSLKFSSPIDIIYPELVKRGCAVDKRYPNVIRVAPVHLYNNYVDIRRFISVLQEVAHIVESE</sequence>
<evidence type="ECO:0000255" key="1">
    <source>
        <dbReference type="HAMAP-Rule" id="MF_03017"/>
    </source>
</evidence>
<evidence type="ECO:0000269" key="2">
    <source>
    </source>
</evidence>
<evidence type="ECO:0000312" key="3">
    <source>
        <dbReference type="WormBase" id="C15H9.7"/>
    </source>
</evidence>
<name>KYNU_CAEEL</name>
<accession>Q18026</accession>
<feature type="chain" id="PRO_0000218660" description="Kynureninase">
    <location>
        <begin position="1"/>
        <end position="478"/>
    </location>
</feature>
<feature type="binding site" evidence="1">
    <location>
        <position position="150"/>
    </location>
    <ligand>
        <name>pyridoxal 5'-phosphate</name>
        <dbReference type="ChEBI" id="CHEBI:597326"/>
    </ligand>
</feature>
<feature type="binding site" evidence="1">
    <location>
        <position position="151"/>
    </location>
    <ligand>
        <name>pyridoxal 5'-phosphate</name>
        <dbReference type="ChEBI" id="CHEBI:597326"/>
    </ligand>
</feature>
<feature type="binding site" evidence="1">
    <location>
        <begin position="178"/>
        <end position="181"/>
    </location>
    <ligand>
        <name>pyridoxal 5'-phosphate</name>
        <dbReference type="ChEBI" id="CHEBI:597326"/>
    </ligand>
</feature>
<feature type="binding site" evidence="1">
    <location>
        <position position="234"/>
    </location>
    <ligand>
        <name>pyridoxal 5'-phosphate</name>
        <dbReference type="ChEBI" id="CHEBI:597326"/>
    </ligand>
</feature>
<feature type="binding site" evidence="1">
    <location>
        <position position="263"/>
    </location>
    <ligand>
        <name>pyridoxal 5'-phosphate</name>
        <dbReference type="ChEBI" id="CHEBI:597326"/>
    </ligand>
</feature>
<feature type="binding site" evidence="1">
    <location>
        <position position="266"/>
    </location>
    <ligand>
        <name>pyridoxal 5'-phosphate</name>
        <dbReference type="ChEBI" id="CHEBI:597326"/>
    </ligand>
</feature>
<feature type="binding site" evidence="1">
    <location>
        <position position="288"/>
    </location>
    <ligand>
        <name>pyridoxal 5'-phosphate</name>
        <dbReference type="ChEBI" id="CHEBI:597326"/>
    </ligand>
</feature>
<feature type="binding site" evidence="1">
    <location>
        <position position="318"/>
    </location>
    <ligand>
        <name>pyridoxal 5'-phosphate</name>
        <dbReference type="ChEBI" id="CHEBI:597326"/>
    </ligand>
</feature>
<feature type="binding site" evidence="1">
    <location>
        <position position="346"/>
    </location>
    <ligand>
        <name>pyridoxal 5'-phosphate</name>
        <dbReference type="ChEBI" id="CHEBI:597326"/>
    </ligand>
</feature>
<feature type="modified residue" description="N6-(pyridoxal phosphate)lysine" evidence="1">
    <location>
        <position position="289"/>
    </location>
</feature>
<protein>
    <recommendedName>
        <fullName evidence="1">Kynureninase</fullName>
        <ecNumber evidence="1">3.7.1.3</ecNumber>
    </recommendedName>
    <alternativeName>
        <fullName>Abnormal fluorescence under UV illumination</fullName>
    </alternativeName>
    <alternativeName>
        <fullName evidence="1">L-kynurenine hydrolase</fullName>
    </alternativeName>
</protein>
<proteinExistence type="evidence at transcript level"/>
<keyword id="KW-0963">Cytoplasm</keyword>
<keyword id="KW-0378">Hydrolase</keyword>
<keyword id="KW-0662">Pyridine nucleotide biosynthesis</keyword>
<keyword id="KW-0663">Pyridoxal phosphate</keyword>
<keyword id="KW-1185">Reference proteome</keyword>
<comment type="function">
    <text evidence="1 2">Catalyzes the cleavage of L-kynurenine (L-Kyn) and L-3-hydroxykynurenine (L-3OHKyn) into anthranilic acid (AA) and 3-hydroxyanthranilic acid (3-OHAA), respectively.</text>
</comment>
<comment type="catalytic activity">
    <reaction evidence="1">
        <text>L-kynurenine + H2O = anthranilate + L-alanine + H(+)</text>
        <dbReference type="Rhea" id="RHEA:16813"/>
        <dbReference type="ChEBI" id="CHEBI:15377"/>
        <dbReference type="ChEBI" id="CHEBI:15378"/>
        <dbReference type="ChEBI" id="CHEBI:16567"/>
        <dbReference type="ChEBI" id="CHEBI:57959"/>
        <dbReference type="ChEBI" id="CHEBI:57972"/>
        <dbReference type="EC" id="3.7.1.3"/>
    </reaction>
</comment>
<comment type="catalytic activity">
    <reaction evidence="1">
        <text>3-hydroxy-L-kynurenine + H2O = 3-hydroxyanthranilate + L-alanine + H(+)</text>
        <dbReference type="Rhea" id="RHEA:25143"/>
        <dbReference type="ChEBI" id="CHEBI:15377"/>
        <dbReference type="ChEBI" id="CHEBI:15378"/>
        <dbReference type="ChEBI" id="CHEBI:36559"/>
        <dbReference type="ChEBI" id="CHEBI:57972"/>
        <dbReference type="ChEBI" id="CHEBI:58125"/>
        <dbReference type="EC" id="3.7.1.3"/>
    </reaction>
</comment>
<comment type="cofactor">
    <cofactor evidence="1">
        <name>pyridoxal 5'-phosphate</name>
        <dbReference type="ChEBI" id="CHEBI:597326"/>
    </cofactor>
</comment>
<comment type="pathway">
    <text evidence="1">Amino-acid degradation; L-kynurenine degradation; L-alanine and anthranilate from L-kynurenine: step 1/1.</text>
</comment>
<comment type="pathway">
    <text evidence="1">Cofactor biosynthesis; NAD(+) biosynthesis; quinolinate from L-kynurenine: step 2/3.</text>
</comment>
<comment type="subunit">
    <text evidence="1">Homodimer.</text>
</comment>
<comment type="subcellular location">
    <subcellularLocation>
        <location evidence="1">Cytoplasm</location>
    </subcellularLocation>
</comment>
<comment type="similarity">
    <text evidence="1">Belongs to the kynureninase family.</text>
</comment>
<gene>
    <name evidence="3" type="primary">kynu-1</name>
    <name evidence="3" type="synonym">flu-2</name>
    <name type="ORF">C15H9.7</name>
</gene>
<reference key="1">
    <citation type="journal article" date="1998" name="Science">
        <title>Genome sequence of the nematode C. elegans: a platform for investigating biology.</title>
        <authorList>
            <consortium name="The C. elegans sequencing consortium"/>
        </authorList>
    </citation>
    <scope>NUCLEOTIDE SEQUENCE [LARGE SCALE GENOMIC DNA]</scope>
    <source>
        <strain>Bristol N2</strain>
    </source>
</reference>
<reference key="2">
    <citation type="submission" date="2000-08" db="EMBL/GenBank/DDBJ databases">
        <title>The Caenorhabditis elegans transcriptome project, a complementary view of the genome.</title>
        <authorList>
            <person name="Kohara Y."/>
            <person name="Shin-i T."/>
            <person name="Suzuki Y."/>
            <person name="Sugano S."/>
            <person name="Potdevin M."/>
            <person name="Thierry-Mieg Y."/>
            <person name="Thierry-Mieg D."/>
            <person name="Thierry-Mieg J."/>
        </authorList>
    </citation>
    <scope>NUCLEOTIDE SEQUENCE [LARGE SCALE MRNA]</scope>
    <source>
        <strain>Bristol N2</strain>
    </source>
</reference>
<reference key="3">
    <citation type="journal article" date="1980" name="Mol. Gen. Genet.">
        <title>Mutagen sensitivity of kynureninase mutants of the nematode Caenorhabditis elegans.</title>
        <authorList>
            <person name="Bhat S.G."/>
            <person name="Babu P."/>
        </authorList>
    </citation>
    <scope>FUNCTION</scope>
</reference>